<evidence type="ECO:0000250" key="1">
    <source>
        <dbReference type="UniProtKB" id="O64879"/>
    </source>
</evidence>
<evidence type="ECO:0000250" key="2">
    <source>
        <dbReference type="UniProtKB" id="Q1XH05"/>
    </source>
</evidence>
<evidence type="ECO:0000250" key="3">
    <source>
        <dbReference type="UniProtKB" id="Q7XSK0"/>
    </source>
</evidence>
<evidence type="ECO:0000250" key="4">
    <source>
        <dbReference type="UniProtKB" id="Q9SPP9"/>
    </source>
</evidence>
<evidence type="ECO:0000255" key="5"/>
<evidence type="ECO:0000255" key="6">
    <source>
        <dbReference type="PROSITE-ProRule" id="PRU00498"/>
    </source>
</evidence>
<evidence type="ECO:0000255" key="7">
    <source>
        <dbReference type="PROSITE-ProRule" id="PRU10138"/>
    </source>
</evidence>
<evidence type="ECO:0000303" key="8">
    <source>
    </source>
</evidence>
<evidence type="ECO:0000305" key="9"/>
<evidence type="ECO:0000312" key="10">
    <source>
        <dbReference type="Araport" id="AT5G28510"/>
    </source>
</evidence>
<evidence type="ECO:0000312" key="11">
    <source>
        <dbReference type="EMBL" id="AAF88017.1"/>
    </source>
</evidence>
<reference key="1">
    <citation type="journal article" date="2000" name="Nature">
        <title>Sequence and analysis of chromosome 5 of the plant Arabidopsis thaliana.</title>
        <authorList>
            <person name="Tabata S."/>
            <person name="Kaneko T."/>
            <person name="Nakamura Y."/>
            <person name="Kotani H."/>
            <person name="Kato T."/>
            <person name="Asamizu E."/>
            <person name="Miyajima N."/>
            <person name="Sasamoto S."/>
            <person name="Kimura T."/>
            <person name="Hosouchi T."/>
            <person name="Kawashima K."/>
            <person name="Kohara M."/>
            <person name="Matsumoto M."/>
            <person name="Matsuno A."/>
            <person name="Muraki A."/>
            <person name="Nakayama S."/>
            <person name="Nakazaki N."/>
            <person name="Naruo K."/>
            <person name="Okumura S."/>
            <person name="Shinpo S."/>
            <person name="Takeuchi C."/>
            <person name="Wada T."/>
            <person name="Watanabe A."/>
            <person name="Yamada M."/>
            <person name="Yasuda M."/>
            <person name="Sato S."/>
            <person name="de la Bastide M."/>
            <person name="Huang E."/>
            <person name="Spiegel L."/>
            <person name="Gnoj L."/>
            <person name="O'Shaughnessy A."/>
            <person name="Preston R."/>
            <person name="Habermann K."/>
            <person name="Murray J."/>
            <person name="Johnson D."/>
            <person name="Rohlfing T."/>
            <person name="Nelson J."/>
            <person name="Stoneking T."/>
            <person name="Pepin K."/>
            <person name="Spieth J."/>
            <person name="Sekhon M."/>
            <person name="Armstrong J."/>
            <person name="Becker M."/>
            <person name="Belter E."/>
            <person name="Cordum H."/>
            <person name="Cordes M."/>
            <person name="Courtney L."/>
            <person name="Courtney W."/>
            <person name="Dante M."/>
            <person name="Du H."/>
            <person name="Edwards J."/>
            <person name="Fryman J."/>
            <person name="Haakensen B."/>
            <person name="Lamar E."/>
            <person name="Latreille P."/>
            <person name="Leonard S."/>
            <person name="Meyer R."/>
            <person name="Mulvaney E."/>
            <person name="Ozersky P."/>
            <person name="Riley A."/>
            <person name="Strowmatt C."/>
            <person name="Wagner-McPherson C."/>
            <person name="Wollam A."/>
            <person name="Yoakum M."/>
            <person name="Bell M."/>
            <person name="Dedhia N."/>
            <person name="Parnell L."/>
            <person name="Shah R."/>
            <person name="Rodriguez M."/>
            <person name="Hoon See L."/>
            <person name="Vil D."/>
            <person name="Baker J."/>
            <person name="Kirchoff K."/>
            <person name="Toth K."/>
            <person name="King L."/>
            <person name="Bahret A."/>
            <person name="Miller B."/>
            <person name="Marra M.A."/>
            <person name="Martienssen R."/>
            <person name="McCombie W.R."/>
            <person name="Wilson R.K."/>
            <person name="Murphy G."/>
            <person name="Bancroft I."/>
            <person name="Volckaert G."/>
            <person name="Wambutt R."/>
            <person name="Duesterhoeft A."/>
            <person name="Stiekema W."/>
            <person name="Pohl T."/>
            <person name="Entian K.-D."/>
            <person name="Terryn N."/>
            <person name="Hartley N."/>
            <person name="Bent E."/>
            <person name="Johnson S."/>
            <person name="Langham S.-A."/>
            <person name="McCullagh B."/>
            <person name="Robben J."/>
            <person name="Grymonprez B."/>
            <person name="Zimmermann W."/>
            <person name="Ramsperger U."/>
            <person name="Wedler H."/>
            <person name="Balke K."/>
            <person name="Wedler E."/>
            <person name="Peters S."/>
            <person name="van Staveren M."/>
            <person name="Dirkse W."/>
            <person name="Mooijman P."/>
            <person name="Klein Lankhorst R."/>
            <person name="Weitzenegger T."/>
            <person name="Bothe G."/>
            <person name="Rose M."/>
            <person name="Hauf J."/>
            <person name="Berneiser S."/>
            <person name="Hempel S."/>
            <person name="Feldpausch M."/>
            <person name="Lamberth S."/>
            <person name="Villarroel R."/>
            <person name="Gielen J."/>
            <person name="Ardiles W."/>
            <person name="Bents O."/>
            <person name="Lemcke K."/>
            <person name="Kolesov G."/>
            <person name="Mayer K.F.X."/>
            <person name="Rudd S."/>
            <person name="Schoof H."/>
            <person name="Schueller C."/>
            <person name="Zaccaria P."/>
            <person name="Mewes H.-W."/>
            <person name="Bevan M."/>
            <person name="Fransz P.F."/>
        </authorList>
    </citation>
    <scope>NUCLEOTIDE SEQUENCE [LARGE SCALE GENOMIC DNA]</scope>
    <source>
        <strain>cv. Columbia</strain>
    </source>
</reference>
<reference key="2">
    <citation type="journal article" date="2017" name="Plant J.">
        <title>Araport11: a complete reannotation of the Arabidopsis thaliana reference genome.</title>
        <authorList>
            <person name="Cheng C.Y."/>
            <person name="Krishnakumar V."/>
            <person name="Chan A.P."/>
            <person name="Thibaud-Nissen F."/>
            <person name="Schobel S."/>
            <person name="Town C.D."/>
        </authorList>
    </citation>
    <scope>GENOME REANNOTATION</scope>
    <source>
        <strain>cv. Columbia</strain>
    </source>
</reference>
<reference key="3">
    <citation type="journal article" date="2004" name="Plant Mol. Biol.">
        <title>Functional genomic analysis of Arabidopsis thaliana glycoside hydrolase family 1.</title>
        <authorList>
            <person name="Xu Z."/>
            <person name="Escamilla-Trevino L.L."/>
            <person name="Zeng L."/>
            <person name="Lalgondar M."/>
            <person name="Bevan D.R."/>
            <person name="Winkel B.S.J."/>
            <person name="Mohamed A."/>
            <person name="Cheng C.-L."/>
            <person name="Shih M.-C."/>
            <person name="Poulton J.E."/>
            <person name="Esen A."/>
        </authorList>
    </citation>
    <scope>GENE FAMILY</scope>
    <scope>NOMENCLATURE</scope>
</reference>
<name>BGL24_ARATH</name>
<proteinExistence type="evidence at transcript level"/>
<gene>
    <name evidence="8" type="primary">BGLU24</name>
    <name evidence="10" type="ordered locus">At5g28510</name>
    <name evidence="11" type="ORF">T26D3.6</name>
</gene>
<comment type="catalytic activity">
    <reaction evidence="1">
        <text>Hydrolysis of terminal, non-reducing beta-D-glucosyl residues with release of beta-D-glucose.</text>
        <dbReference type="EC" id="3.2.1.21"/>
    </reaction>
</comment>
<comment type="subcellular location">
    <subcellularLocation>
        <location evidence="7">Endoplasmic reticulum lumen</location>
    </subcellularLocation>
</comment>
<comment type="similarity">
    <text evidence="9">Belongs to the glycosyl hydrolase 1 family.</text>
</comment>
<comment type="sequence caution" evidence="9">
    <conflict type="erroneous gene model prediction">
        <sequence resource="EMBL-CDS" id="AAF88017"/>
    </conflict>
</comment>
<sequence length="533" mass="61034">MVLQKLPLMSIGLLWLLIIVGPLVNADGPVCPPKPSDKLSRAHFPKGFLFGTATAAYQVEGAVNETCRGPSVWDIYCKKYPEKCNGDNGTQAVDFFYRYKEDIQLMKNLNTDSFRLSISWTRIFPHGREENGVSKSGVQFYHDLIDELKRNGIIPFVTVFHWDTPQTLENEYGGFLSAHIVKDFREYAEFVFKEYGGKVKHWITFNEPWVFAHAGYDVGKKAPGRCSPYAKDETVKGDCLGGRSGYEAYLVSHNLLNAHAEAVEAFRQCEKCKGGKIGIAHSPAWFEPHDFKDEQSGATIDRALDFIMGWHLDTTMFGDYPQTMKDIVGHRLPKFTTEQIAKLKNSADFVGINYYTSTFSKHLEKPNHAEPKFKQDSLVEWKNKNVNNITIGSKPETGPLPVYSTGFRKVLKYVKDKYANPEIIIMENGYGENLKENDSVENGTADYNRESYLKKHLWSMHKAICEDKVNVTGYFVWSLMDNFEWQDGFKNRFGLYYIDYKNNLTRHEKVSGKYYREFLSEGVRPSAIKKDEL</sequence>
<keyword id="KW-1015">Disulfide bond</keyword>
<keyword id="KW-0256">Endoplasmic reticulum</keyword>
<keyword id="KW-0325">Glycoprotein</keyword>
<keyword id="KW-0326">Glycosidase</keyword>
<keyword id="KW-0378">Hydrolase</keyword>
<keyword id="KW-1185">Reference proteome</keyword>
<keyword id="KW-0732">Signal</keyword>
<accession>Q9LKR7</accession>
<organism>
    <name type="scientific">Arabidopsis thaliana</name>
    <name type="common">Mouse-ear cress</name>
    <dbReference type="NCBI Taxonomy" id="3702"/>
    <lineage>
        <taxon>Eukaryota</taxon>
        <taxon>Viridiplantae</taxon>
        <taxon>Streptophyta</taxon>
        <taxon>Embryophyta</taxon>
        <taxon>Tracheophyta</taxon>
        <taxon>Spermatophyta</taxon>
        <taxon>Magnoliopsida</taxon>
        <taxon>eudicotyledons</taxon>
        <taxon>Gunneridae</taxon>
        <taxon>Pentapetalae</taxon>
        <taxon>rosids</taxon>
        <taxon>malvids</taxon>
        <taxon>Brassicales</taxon>
        <taxon>Brassicaceae</taxon>
        <taxon>Camelineae</taxon>
        <taxon>Arabidopsis</taxon>
    </lineage>
</organism>
<feature type="signal peptide" evidence="5">
    <location>
        <begin position="1"/>
        <end position="26"/>
    </location>
</feature>
<feature type="chain" id="PRO_0000389586" description="Beta-glucosidase 24">
    <location>
        <begin position="27"/>
        <end position="533"/>
    </location>
</feature>
<feature type="short sequence motif" description="Prevents secretion from ER" evidence="7">
    <location>
        <begin position="530"/>
        <end position="533"/>
    </location>
</feature>
<feature type="active site" description="Proton donor" evidence="3">
    <location>
        <position position="207"/>
    </location>
</feature>
<feature type="active site" description="Nucleophile" evidence="3">
    <location>
        <position position="427"/>
    </location>
</feature>
<feature type="binding site" evidence="3">
    <location>
        <position position="58"/>
    </location>
    <ligand>
        <name>a beta-D-glucoside</name>
        <dbReference type="ChEBI" id="CHEBI:22798"/>
    </ligand>
</feature>
<feature type="binding site" evidence="3">
    <location>
        <position position="161"/>
    </location>
    <ligand>
        <name>a beta-D-glucoside</name>
        <dbReference type="ChEBI" id="CHEBI:22798"/>
    </ligand>
</feature>
<feature type="binding site" evidence="3">
    <location>
        <begin position="206"/>
        <end position="207"/>
    </location>
    <ligand>
        <name>a beta-D-glucoside</name>
        <dbReference type="ChEBI" id="CHEBI:22798"/>
    </ligand>
</feature>
<feature type="binding site" evidence="3">
    <location>
        <position position="355"/>
    </location>
    <ligand>
        <name>a beta-D-glucoside</name>
        <dbReference type="ChEBI" id="CHEBI:22798"/>
    </ligand>
</feature>
<feature type="binding site" evidence="4">
    <location>
        <position position="427"/>
    </location>
    <ligand>
        <name>a beta-D-glucoside</name>
        <dbReference type="ChEBI" id="CHEBI:22798"/>
    </ligand>
</feature>
<feature type="binding site" evidence="3">
    <location>
        <position position="477"/>
    </location>
    <ligand>
        <name>a beta-D-glucoside</name>
        <dbReference type="ChEBI" id="CHEBI:22798"/>
    </ligand>
</feature>
<feature type="binding site" evidence="3">
    <location>
        <begin position="484"/>
        <end position="485"/>
    </location>
    <ligand>
        <name>a beta-D-glucoside</name>
        <dbReference type="ChEBI" id="CHEBI:22798"/>
    </ligand>
</feature>
<feature type="binding site" evidence="2">
    <location>
        <position position="493"/>
    </location>
    <ligand>
        <name>a beta-D-glucoside</name>
        <dbReference type="ChEBI" id="CHEBI:22798"/>
    </ligand>
</feature>
<feature type="glycosylation site" description="N-linked (GlcNAc...) asparagine" evidence="6">
    <location>
        <position position="64"/>
    </location>
</feature>
<feature type="glycosylation site" description="N-linked (GlcNAc...) asparagine" evidence="6">
    <location>
        <position position="88"/>
    </location>
</feature>
<feature type="glycosylation site" description="N-linked (GlcNAc...) asparagine" evidence="6">
    <location>
        <position position="388"/>
    </location>
</feature>
<feature type="glycosylation site" description="N-linked (GlcNAc...) asparagine" evidence="6">
    <location>
        <position position="437"/>
    </location>
</feature>
<feature type="glycosylation site" description="N-linked (GlcNAc...) asparagine" evidence="6">
    <location>
        <position position="442"/>
    </location>
</feature>
<feature type="glycosylation site" description="N-linked (GlcNAc...) asparagine" evidence="6">
    <location>
        <position position="470"/>
    </location>
</feature>
<feature type="glycosylation site" description="N-linked (GlcNAc...) asparagine" evidence="6">
    <location>
        <position position="503"/>
    </location>
</feature>
<feature type="disulfide bond" evidence="3">
    <location>
        <begin position="226"/>
        <end position="239"/>
    </location>
</feature>
<protein>
    <recommendedName>
        <fullName evidence="8">Beta-glucosidase 24</fullName>
        <shortName evidence="8">AtBGLU24</shortName>
        <ecNumber evidence="1">3.2.1.21</ecNumber>
    </recommendedName>
</protein>
<dbReference type="EC" id="3.2.1.21" evidence="1"/>
<dbReference type="EMBL" id="AF262043">
    <property type="protein sequence ID" value="AAF88017.1"/>
    <property type="status" value="ALT_SEQ"/>
    <property type="molecule type" value="Genomic_DNA"/>
</dbReference>
<dbReference type="EMBL" id="CP002688">
    <property type="protein sequence ID" value="AED93809.1"/>
    <property type="molecule type" value="Genomic_DNA"/>
</dbReference>
<dbReference type="RefSeq" id="NP_198203.1">
    <property type="nucleotide sequence ID" value="NM_122734.2"/>
</dbReference>
<dbReference type="SMR" id="Q9LKR7"/>
<dbReference type="FunCoup" id="Q9LKR7">
    <property type="interactions" value="196"/>
</dbReference>
<dbReference type="STRING" id="3702.Q9LKR7"/>
<dbReference type="CAZy" id="GH1">
    <property type="family name" value="Glycoside Hydrolase Family 1"/>
</dbReference>
<dbReference type="GlyCosmos" id="Q9LKR7">
    <property type="glycosylation" value="7 sites, No reported glycans"/>
</dbReference>
<dbReference type="GlyGen" id="Q9LKR7">
    <property type="glycosylation" value="7 sites"/>
</dbReference>
<dbReference type="PaxDb" id="3702-AT5G28510.1"/>
<dbReference type="ProteomicsDB" id="240681"/>
<dbReference type="EnsemblPlants" id="AT5G28510.1">
    <property type="protein sequence ID" value="AT5G28510.1"/>
    <property type="gene ID" value="AT5G28510"/>
</dbReference>
<dbReference type="GeneID" id="832944"/>
<dbReference type="Gramene" id="AT5G28510.1">
    <property type="protein sequence ID" value="AT5G28510.1"/>
    <property type="gene ID" value="AT5G28510"/>
</dbReference>
<dbReference type="KEGG" id="ath:AT5G28510"/>
<dbReference type="Araport" id="AT5G28510"/>
<dbReference type="TAIR" id="AT5G28510">
    <property type="gene designation" value="BGLU24"/>
</dbReference>
<dbReference type="eggNOG" id="KOG0626">
    <property type="taxonomic scope" value="Eukaryota"/>
</dbReference>
<dbReference type="HOGENOM" id="CLU_001859_1_0_1"/>
<dbReference type="InParanoid" id="Q9LKR7"/>
<dbReference type="OMA" id="IIMENGY"/>
<dbReference type="PhylomeDB" id="Q9LKR7"/>
<dbReference type="BioCyc" id="ARA:AT5G28510-MONOMER"/>
<dbReference type="PRO" id="PR:Q9LKR7"/>
<dbReference type="Proteomes" id="UP000006548">
    <property type="component" value="Chromosome 5"/>
</dbReference>
<dbReference type="ExpressionAtlas" id="Q9LKR7">
    <property type="expression patterns" value="baseline and differential"/>
</dbReference>
<dbReference type="GO" id="GO:0005788">
    <property type="term" value="C:endoplasmic reticulum lumen"/>
    <property type="evidence" value="ECO:0007669"/>
    <property type="project" value="UniProtKB-SubCell"/>
</dbReference>
<dbReference type="GO" id="GO:0009536">
    <property type="term" value="C:plastid"/>
    <property type="evidence" value="ECO:0007005"/>
    <property type="project" value="TAIR"/>
</dbReference>
<dbReference type="GO" id="GO:0008422">
    <property type="term" value="F:beta-glucosidase activity"/>
    <property type="evidence" value="ECO:0007669"/>
    <property type="project" value="UniProtKB-EC"/>
</dbReference>
<dbReference type="GO" id="GO:0005975">
    <property type="term" value="P:carbohydrate metabolic process"/>
    <property type="evidence" value="ECO:0007669"/>
    <property type="project" value="InterPro"/>
</dbReference>
<dbReference type="FunFam" id="3.20.20.80:FF:000022">
    <property type="entry name" value="Beta-glucosidase 11"/>
    <property type="match status" value="1"/>
</dbReference>
<dbReference type="Gene3D" id="3.20.20.80">
    <property type="entry name" value="Glycosidases"/>
    <property type="match status" value="1"/>
</dbReference>
<dbReference type="InterPro" id="IPR001360">
    <property type="entry name" value="Glyco_hydro_1"/>
</dbReference>
<dbReference type="InterPro" id="IPR033132">
    <property type="entry name" value="Glyco_hydro_1_N_CS"/>
</dbReference>
<dbReference type="InterPro" id="IPR017853">
    <property type="entry name" value="Glycoside_hydrolase_SF"/>
</dbReference>
<dbReference type="PANTHER" id="PTHR10353:SF235">
    <property type="entry name" value="BETA-GLUCOSIDASE 24"/>
    <property type="match status" value="1"/>
</dbReference>
<dbReference type="PANTHER" id="PTHR10353">
    <property type="entry name" value="GLYCOSYL HYDROLASE"/>
    <property type="match status" value="1"/>
</dbReference>
<dbReference type="Pfam" id="PF00232">
    <property type="entry name" value="Glyco_hydro_1"/>
    <property type="match status" value="1"/>
</dbReference>
<dbReference type="PRINTS" id="PR00131">
    <property type="entry name" value="GLHYDRLASE1"/>
</dbReference>
<dbReference type="SUPFAM" id="SSF51445">
    <property type="entry name" value="(Trans)glycosidases"/>
    <property type="match status" value="1"/>
</dbReference>
<dbReference type="PROSITE" id="PS00014">
    <property type="entry name" value="ER_TARGET"/>
    <property type="match status" value="1"/>
</dbReference>
<dbReference type="PROSITE" id="PS00653">
    <property type="entry name" value="GLYCOSYL_HYDROL_F1_2"/>
    <property type="match status" value="1"/>
</dbReference>